<proteinExistence type="inferred from homology"/>
<protein>
    <recommendedName>
        <fullName evidence="1">Phosphate acyltransferase</fullName>
        <ecNumber evidence="1">2.3.1.274</ecNumber>
    </recommendedName>
    <alternativeName>
        <fullName evidence="1">Acyl-ACP phosphotransacylase</fullName>
    </alternativeName>
    <alternativeName>
        <fullName evidence="1">Acyl-[acyl-carrier-protein]--phosphate acyltransferase</fullName>
    </alternativeName>
    <alternativeName>
        <fullName evidence="1">Phosphate-acyl-ACP acyltransferase</fullName>
    </alternativeName>
</protein>
<evidence type="ECO:0000255" key="1">
    <source>
        <dbReference type="HAMAP-Rule" id="MF_00019"/>
    </source>
</evidence>
<sequence>MVKIAIDAMGGDFGPKPIIDGCIQALKQKLFIPILVGKKSEILPLLPKRYRDKISIVEADDVVSMHDAATDALKRSESSIYKAIELVKNGEAQGVVSAGHSGATMTLATLRLGRLKGVLRPALVALMPTKSSRRSVILDVGANVDSKAEHLMQFAVMGGCYAEDMFKITTPSIGLLANGEEKSKGNELTKATFKLLEGYKGFKGNVEGSDIFNASCDVIVCDGFVGNLVLKASEGVASTITGLIKEYIRKSPVAITGALLMRKVFVLLKKQMDYAEIGGAPLIGIQGCVIVSHGKSNPKAIKNAIFQAISYVDTGVNGHIIQRLETLKNREN</sequence>
<comment type="function">
    <text evidence="1">Catalyzes the reversible formation of acyl-phosphate (acyl-PO(4)) from acyl-[acyl-carrier-protein] (acyl-ACP). This enzyme utilizes acyl-ACP as fatty acyl donor, but not acyl-CoA.</text>
</comment>
<comment type="catalytic activity">
    <reaction evidence="1">
        <text>a fatty acyl-[ACP] + phosphate = an acyl phosphate + holo-[ACP]</text>
        <dbReference type="Rhea" id="RHEA:42292"/>
        <dbReference type="Rhea" id="RHEA-COMP:9685"/>
        <dbReference type="Rhea" id="RHEA-COMP:14125"/>
        <dbReference type="ChEBI" id="CHEBI:43474"/>
        <dbReference type="ChEBI" id="CHEBI:59918"/>
        <dbReference type="ChEBI" id="CHEBI:64479"/>
        <dbReference type="ChEBI" id="CHEBI:138651"/>
        <dbReference type="EC" id="2.3.1.274"/>
    </reaction>
</comment>
<comment type="pathway">
    <text evidence="1">Lipid metabolism; phospholipid metabolism.</text>
</comment>
<comment type="subunit">
    <text evidence="1">Homodimer. Probably interacts with PlsY.</text>
</comment>
<comment type="subcellular location">
    <subcellularLocation>
        <location evidence="1">Cytoplasm</location>
    </subcellularLocation>
    <text evidence="1">Associated with the membrane possibly through PlsY.</text>
</comment>
<comment type="similarity">
    <text evidence="1">Belongs to the PlsX family.</text>
</comment>
<accession>Q30PN5</accession>
<dbReference type="EC" id="2.3.1.274" evidence="1"/>
<dbReference type="EMBL" id="CP000153">
    <property type="protein sequence ID" value="ABB45046.1"/>
    <property type="molecule type" value="Genomic_DNA"/>
</dbReference>
<dbReference type="RefSeq" id="WP_011373387.1">
    <property type="nucleotide sequence ID" value="NC_007575.1"/>
</dbReference>
<dbReference type="SMR" id="Q30PN5"/>
<dbReference type="STRING" id="326298.Suden_1772"/>
<dbReference type="KEGG" id="tdn:Suden_1772"/>
<dbReference type="eggNOG" id="COG0416">
    <property type="taxonomic scope" value="Bacteria"/>
</dbReference>
<dbReference type="HOGENOM" id="CLU_039379_1_1_7"/>
<dbReference type="OrthoDB" id="9806408at2"/>
<dbReference type="UniPathway" id="UPA00085"/>
<dbReference type="Proteomes" id="UP000002714">
    <property type="component" value="Chromosome"/>
</dbReference>
<dbReference type="GO" id="GO:0005737">
    <property type="term" value="C:cytoplasm"/>
    <property type="evidence" value="ECO:0007669"/>
    <property type="project" value="UniProtKB-SubCell"/>
</dbReference>
<dbReference type="GO" id="GO:0043811">
    <property type="term" value="F:phosphate:acyl-[acyl carrier protein] acyltransferase activity"/>
    <property type="evidence" value="ECO:0007669"/>
    <property type="project" value="UniProtKB-UniRule"/>
</dbReference>
<dbReference type="GO" id="GO:0006633">
    <property type="term" value="P:fatty acid biosynthetic process"/>
    <property type="evidence" value="ECO:0007669"/>
    <property type="project" value="UniProtKB-UniRule"/>
</dbReference>
<dbReference type="GO" id="GO:0008654">
    <property type="term" value="P:phospholipid biosynthetic process"/>
    <property type="evidence" value="ECO:0007669"/>
    <property type="project" value="UniProtKB-KW"/>
</dbReference>
<dbReference type="Gene3D" id="3.40.718.10">
    <property type="entry name" value="Isopropylmalate Dehydrogenase"/>
    <property type="match status" value="1"/>
</dbReference>
<dbReference type="HAMAP" id="MF_00019">
    <property type="entry name" value="PlsX"/>
    <property type="match status" value="1"/>
</dbReference>
<dbReference type="InterPro" id="IPR003664">
    <property type="entry name" value="FA_synthesis"/>
</dbReference>
<dbReference type="InterPro" id="IPR012281">
    <property type="entry name" value="Phospholipid_synth_PlsX-like"/>
</dbReference>
<dbReference type="NCBIfam" id="TIGR00182">
    <property type="entry name" value="plsX"/>
    <property type="match status" value="1"/>
</dbReference>
<dbReference type="PANTHER" id="PTHR30100">
    <property type="entry name" value="FATTY ACID/PHOSPHOLIPID SYNTHESIS PROTEIN PLSX"/>
    <property type="match status" value="1"/>
</dbReference>
<dbReference type="PANTHER" id="PTHR30100:SF1">
    <property type="entry name" value="PHOSPHATE ACYLTRANSFERASE"/>
    <property type="match status" value="1"/>
</dbReference>
<dbReference type="Pfam" id="PF02504">
    <property type="entry name" value="FA_synthesis"/>
    <property type="match status" value="1"/>
</dbReference>
<dbReference type="PIRSF" id="PIRSF002465">
    <property type="entry name" value="Phsphlp_syn_PlsX"/>
    <property type="match status" value="1"/>
</dbReference>
<dbReference type="SUPFAM" id="SSF53659">
    <property type="entry name" value="Isocitrate/Isopropylmalate dehydrogenase-like"/>
    <property type="match status" value="1"/>
</dbReference>
<feature type="chain" id="PRO_1000001857" description="Phosphate acyltransferase">
    <location>
        <begin position="1"/>
        <end position="332"/>
    </location>
</feature>
<organism>
    <name type="scientific">Sulfurimonas denitrificans (strain ATCC 33889 / DSM 1251)</name>
    <name type="common">Thiomicrospira denitrificans (strain ATCC 33889 / DSM 1251)</name>
    <dbReference type="NCBI Taxonomy" id="326298"/>
    <lineage>
        <taxon>Bacteria</taxon>
        <taxon>Pseudomonadati</taxon>
        <taxon>Campylobacterota</taxon>
        <taxon>Epsilonproteobacteria</taxon>
        <taxon>Campylobacterales</taxon>
        <taxon>Sulfurimonadaceae</taxon>
        <taxon>Sulfurimonas</taxon>
    </lineage>
</organism>
<gene>
    <name evidence="1" type="primary">plsX</name>
    <name type="ordered locus">Suden_1772</name>
</gene>
<reference key="1">
    <citation type="journal article" date="2008" name="Appl. Environ. Microbiol.">
        <title>Genome of the epsilonproteobacterial chemolithoautotroph Sulfurimonas denitrificans.</title>
        <authorList>
            <person name="Sievert S.M."/>
            <person name="Scott K.M."/>
            <person name="Klotz M.G."/>
            <person name="Chain P.S.G."/>
            <person name="Hauser L.J."/>
            <person name="Hemp J."/>
            <person name="Huegler M."/>
            <person name="Land M."/>
            <person name="Lapidus A."/>
            <person name="Larimer F.W."/>
            <person name="Lucas S."/>
            <person name="Malfatti S.A."/>
            <person name="Meyer F."/>
            <person name="Paulsen I.T."/>
            <person name="Ren Q."/>
            <person name="Simon J."/>
            <person name="Bailey K."/>
            <person name="Diaz E."/>
            <person name="Fitzpatrick K.A."/>
            <person name="Glover B."/>
            <person name="Gwatney N."/>
            <person name="Korajkic A."/>
            <person name="Long A."/>
            <person name="Mobberley J.M."/>
            <person name="Pantry S.N."/>
            <person name="Pazder G."/>
            <person name="Peterson S."/>
            <person name="Quintanilla J.D."/>
            <person name="Sprinkle R."/>
            <person name="Stephens J."/>
            <person name="Thomas P."/>
            <person name="Vaughn R."/>
            <person name="Weber M.J."/>
            <person name="Wooten L.L."/>
        </authorList>
    </citation>
    <scope>NUCLEOTIDE SEQUENCE [LARGE SCALE GENOMIC DNA]</scope>
    <source>
        <strain>ATCC 33889 / DSM 1251</strain>
    </source>
</reference>
<name>PLSX_SULDN</name>
<keyword id="KW-0963">Cytoplasm</keyword>
<keyword id="KW-0444">Lipid biosynthesis</keyword>
<keyword id="KW-0443">Lipid metabolism</keyword>
<keyword id="KW-0594">Phospholipid biosynthesis</keyword>
<keyword id="KW-1208">Phospholipid metabolism</keyword>
<keyword id="KW-1185">Reference proteome</keyword>
<keyword id="KW-0808">Transferase</keyword>